<protein>
    <recommendedName>
        <fullName>Protein YchS</fullName>
    </recommendedName>
</protein>
<sequence>MVVGEGLLSAARFALRVVACGNALSLALKSNLGRSFSSFPAWAEYLITDSFESSGTFESDGGGGRITQRCALRPSGRCLRQRSLAGARVEP</sequence>
<name>YCHS_ECO57</name>
<proteinExistence type="predicted"/>
<keyword id="KW-1185">Reference proteome</keyword>
<gene>
    <name type="primary">ychS</name>
    <name type="ordered locus">Z2003.1</name>
    <name type="ordered locus">ECs1733</name>
</gene>
<dbReference type="EMBL" id="AE005174">
    <property type="status" value="NOT_ANNOTATED_CDS"/>
    <property type="molecule type" value="Genomic_DNA"/>
</dbReference>
<dbReference type="EMBL" id="BA000007">
    <property type="protein sequence ID" value="BAB35156.1"/>
    <property type="molecule type" value="Genomic_DNA"/>
</dbReference>
<dbReference type="PIR" id="E90845">
    <property type="entry name" value="E90845"/>
</dbReference>
<dbReference type="RefSeq" id="NP_309760.1">
    <property type="nucleotide sequence ID" value="NC_002695.1"/>
</dbReference>
<dbReference type="STRING" id="386585.gene:10364744"/>
<dbReference type="PATRIC" id="fig|83334.175.peg.2910"/>
<dbReference type="HOGENOM" id="CLU_159887_0_0_6"/>
<dbReference type="OMA" id="VEPWSKL"/>
<dbReference type="Proteomes" id="UP000000558">
    <property type="component" value="Chromosome"/>
</dbReference>
<dbReference type="Proteomes" id="UP000002519">
    <property type="component" value="Chromosome"/>
</dbReference>
<reference key="1">
    <citation type="journal article" date="2001" name="Nature">
        <title>Genome sequence of enterohaemorrhagic Escherichia coli O157:H7.</title>
        <authorList>
            <person name="Perna N.T."/>
            <person name="Plunkett G. III"/>
            <person name="Burland V."/>
            <person name="Mau B."/>
            <person name="Glasner J.D."/>
            <person name="Rose D.J."/>
            <person name="Mayhew G.F."/>
            <person name="Evans P.S."/>
            <person name="Gregor J."/>
            <person name="Kirkpatrick H.A."/>
            <person name="Posfai G."/>
            <person name="Hackett J."/>
            <person name="Klink S."/>
            <person name="Boutin A."/>
            <person name="Shao Y."/>
            <person name="Miller L."/>
            <person name="Grotbeck E.J."/>
            <person name="Davis N.W."/>
            <person name="Lim A."/>
            <person name="Dimalanta E.T."/>
            <person name="Potamousis K."/>
            <person name="Apodaca J."/>
            <person name="Anantharaman T.S."/>
            <person name="Lin J."/>
            <person name="Yen G."/>
            <person name="Schwartz D.C."/>
            <person name="Welch R.A."/>
            <person name="Blattner F.R."/>
        </authorList>
    </citation>
    <scope>NUCLEOTIDE SEQUENCE [LARGE SCALE GENOMIC DNA]</scope>
    <source>
        <strain>O157:H7 / EDL933 / ATCC 700927 / EHEC</strain>
    </source>
</reference>
<reference key="2">
    <citation type="journal article" date="2001" name="DNA Res.">
        <title>Complete genome sequence of enterohemorrhagic Escherichia coli O157:H7 and genomic comparison with a laboratory strain K-12.</title>
        <authorList>
            <person name="Hayashi T."/>
            <person name="Makino K."/>
            <person name="Ohnishi M."/>
            <person name="Kurokawa K."/>
            <person name="Ishii K."/>
            <person name="Yokoyama K."/>
            <person name="Han C.-G."/>
            <person name="Ohtsubo E."/>
            <person name="Nakayama K."/>
            <person name="Murata T."/>
            <person name="Tanaka M."/>
            <person name="Tobe T."/>
            <person name="Iida T."/>
            <person name="Takami H."/>
            <person name="Honda T."/>
            <person name="Sasakawa C."/>
            <person name="Ogasawara N."/>
            <person name="Yasunaga T."/>
            <person name="Kuhara S."/>
            <person name="Shiba T."/>
            <person name="Hattori M."/>
            <person name="Shinagawa H."/>
        </authorList>
    </citation>
    <scope>NUCLEOTIDE SEQUENCE [LARGE SCALE GENOMIC DNA]</scope>
    <source>
        <strain>O157:H7 / Sakai / RIMD 0509952 / EHEC</strain>
    </source>
</reference>
<feature type="chain" id="PRO_0000252173" description="Protein YchS">
    <location>
        <begin position="1"/>
        <end position="91"/>
    </location>
</feature>
<organism>
    <name type="scientific">Escherichia coli O157:H7</name>
    <dbReference type="NCBI Taxonomy" id="83334"/>
    <lineage>
        <taxon>Bacteria</taxon>
        <taxon>Pseudomonadati</taxon>
        <taxon>Pseudomonadota</taxon>
        <taxon>Gammaproteobacteria</taxon>
        <taxon>Enterobacterales</taxon>
        <taxon>Enterobacteriaceae</taxon>
        <taxon>Escherichia</taxon>
    </lineage>
</organism>
<accession>Q8X2V7</accession>